<gene>
    <name type="primary">VIII</name>
</gene>
<accession>P82889</accession>
<protein>
    <recommendedName>
        <fullName>Capsid protein G8P</fullName>
    </recommendedName>
    <alternativeName>
        <fullName>Coat protein B</fullName>
    </alternativeName>
    <alternativeName>
        <fullName>Gene 8 protein</fullName>
        <shortName>G8P</shortName>
    </alternativeName>
    <alternativeName>
        <fullName>Major coat protein</fullName>
    </alternativeName>
</protein>
<reference key="1">
    <citation type="journal article" date="2001" name="J. Mol. Biol.">
        <title>The protein capsid of filamentous bacteriophage PH75 from Thermus thermophilus.</title>
        <authorList>
            <person name="Pederson D.M."/>
            <person name="Welsh L.C."/>
            <person name="Marvin D.A."/>
            <person name="Sampson M."/>
            <person name="Perham R.N."/>
            <person name="Yu M."/>
            <person name="Slater M.R."/>
        </authorList>
    </citation>
    <scope>PROTEIN SEQUENCE</scope>
    <scope>X-RAY CRYSTALLOGRAPHY (2.4 ANGSTROMS)</scope>
    <scope>FORMYLATION AT MET-1</scope>
</reference>
<evidence type="ECO:0000250" key="1"/>
<evidence type="ECO:0000255" key="2"/>
<evidence type="ECO:0000269" key="3">
    <source>
    </source>
</evidence>
<evidence type="ECO:0000305" key="4"/>
<evidence type="ECO:0007829" key="5">
    <source>
        <dbReference type="PDB" id="1HGV"/>
    </source>
</evidence>
<evidence type="ECO:0007829" key="6">
    <source>
        <dbReference type="PDB" id="1HH0"/>
    </source>
</evidence>
<name>CAPSD_BPH75</name>
<feature type="chain" id="PRO_0000098233" description="Capsid protein G8P">
    <location>
        <begin position="1"/>
        <end position="46"/>
    </location>
</feature>
<feature type="topological domain" description="Periplasmic" evidence="2">
    <location>
        <begin position="1"/>
        <end position="17"/>
    </location>
</feature>
<feature type="transmembrane region" description="Helical" evidence="2">
    <location>
        <begin position="18"/>
        <end position="37"/>
    </location>
</feature>
<feature type="topological domain" description="Cytoplasmic" evidence="2">
    <location>
        <begin position="38"/>
        <end position="46"/>
    </location>
</feature>
<feature type="modified residue" description="N-formylmethionine; by host" evidence="3">
    <location>
        <position position="1"/>
    </location>
</feature>
<feature type="helix" evidence="5">
    <location>
        <begin position="6"/>
        <end position="13"/>
    </location>
</feature>
<feature type="turn" evidence="5">
    <location>
        <begin position="14"/>
        <end position="16"/>
    </location>
</feature>
<feature type="helix" evidence="5">
    <location>
        <begin position="17"/>
        <end position="42"/>
    </location>
</feature>
<feature type="helix" evidence="6">
    <location>
        <begin position="43"/>
        <end position="45"/>
    </location>
</feature>
<comment type="function">
    <text evidence="1">Self assembles to form a helical capsid wrapping up the viral genomic DNA. The capsid displays a filamentous structure with a length of 760-1950 nm and a width of 6-8 nm. The virion assembly and budding take place at the host inner membrane (By similarity).</text>
</comment>
<comment type="subunit">
    <text evidence="1">Homomultimerizes. There are several thousands of this protein in the phage capsid (By similarity).</text>
</comment>
<comment type="subcellular location">
    <subcellularLocation>
        <location evidence="4">Virion</location>
    </subcellularLocation>
    <subcellularLocation>
        <location>Host membrane</location>
        <topology>Single-pass membrane protein</topology>
    </subcellularLocation>
    <text evidence="1">prior to assembly, the major capsid protein is found associated with the bacterial host inner membrane.</text>
</comment>
<comment type="similarity">
    <text evidence="4">Belongs to the inovirus capsid protein family.</text>
</comment>
<organismHost>
    <name type="scientific">Thermus thermophilus</name>
    <dbReference type="NCBI Taxonomy" id="274"/>
</organismHost>
<sequence length="46" mass="4813">MDFNPSEVASQVTNYIQAIAAAGVGVLALAIGLSAAWKYAKRFLKG</sequence>
<organism>
    <name type="scientific">Thermus phage PH75</name>
    <name type="common">Bacteriophage PH75</name>
    <dbReference type="NCBI Taxonomy" id="144736"/>
    <lineage>
        <taxon>Viruses</taxon>
        <taxon>Monodnaviria</taxon>
        <taxon>Loebvirae</taxon>
        <taxon>Hofneiviricota</taxon>
        <taxon>Faserviricetes</taxon>
        <taxon>Tubulavirales</taxon>
        <taxon>Inoviridae</taxon>
    </lineage>
</organism>
<dbReference type="PDB" id="1HGV">
    <property type="method" value="Fiber"/>
    <property type="resolution" value="2.40 A"/>
    <property type="chains" value="A=1-46"/>
</dbReference>
<dbReference type="PDB" id="1HGZ">
    <property type="method" value="Fiber"/>
    <property type="resolution" value="2.40 A"/>
    <property type="chains" value="A=1-46"/>
</dbReference>
<dbReference type="PDB" id="1HH0">
    <property type="method" value="Fiber"/>
    <property type="resolution" value="2.40 A"/>
    <property type="chains" value="A=1-46"/>
</dbReference>
<dbReference type="PDBsum" id="1HGV"/>
<dbReference type="PDBsum" id="1HGZ"/>
<dbReference type="PDBsum" id="1HH0"/>
<dbReference type="SMR" id="P82889"/>
<dbReference type="EvolutionaryTrace" id="P82889"/>
<dbReference type="GO" id="GO:0019029">
    <property type="term" value="C:helical viral capsid"/>
    <property type="evidence" value="ECO:0007669"/>
    <property type="project" value="UniProtKB-KW"/>
</dbReference>
<dbReference type="GO" id="GO:0033644">
    <property type="term" value="C:host cell membrane"/>
    <property type="evidence" value="ECO:0007669"/>
    <property type="project" value="UniProtKB-SubCell"/>
</dbReference>
<dbReference type="GO" id="GO:0016020">
    <property type="term" value="C:membrane"/>
    <property type="evidence" value="ECO:0007669"/>
    <property type="project" value="UniProtKB-KW"/>
</dbReference>
<dbReference type="Gene3D" id="1.20.5.80">
    <property type="match status" value="1"/>
</dbReference>
<dbReference type="InterPro" id="IPR023390">
    <property type="entry name" value="Phage_M13_G8P_capsid_dom_sf"/>
</dbReference>
<dbReference type="SUPFAM" id="SSF57987">
    <property type="entry name" value="Inovirus (filamentous phage) major coat protein"/>
    <property type="match status" value="1"/>
</dbReference>
<keyword id="KW-0002">3D-structure</keyword>
<keyword id="KW-0167">Capsid protein</keyword>
<keyword id="KW-0903">Direct protein sequencing</keyword>
<keyword id="KW-0291">Formylation</keyword>
<keyword id="KW-1139">Helical capsid protein</keyword>
<keyword id="KW-1043">Host membrane</keyword>
<keyword id="KW-0472">Membrane</keyword>
<keyword id="KW-0812">Transmembrane</keyword>
<keyword id="KW-1133">Transmembrane helix</keyword>
<keyword id="KW-0946">Virion</keyword>
<proteinExistence type="evidence at protein level"/>